<gene>
    <name type="primary">cry1Bd</name>
    <name type="synonym">cryE1</name>
    <name type="synonym">cryIB(d)</name>
    <name type="synonym">cryLA1</name>
</gene>
<organism>
    <name type="scientific">Bacillus thuringiensis subsp. wuhanensis</name>
    <dbReference type="NCBI Taxonomy" id="52024"/>
    <lineage>
        <taxon>Bacteria</taxon>
        <taxon>Bacillati</taxon>
        <taxon>Bacillota</taxon>
        <taxon>Bacilli</taxon>
        <taxon>Bacillales</taxon>
        <taxon>Bacillaceae</taxon>
        <taxon>Bacillus</taxon>
        <taxon>Bacillus cereus group</taxon>
    </lineage>
</organism>
<comment type="function">
    <text>Promotes colloidosmotic lysis by binding to the midgut epithelial cells of lepidopteran larvae. Toxic to Plutella xylostella.</text>
</comment>
<comment type="developmental stage">
    <text>The crystal protein is produced during sporulation and is accumulated both as an inclusion and as part of the spore coat.</text>
</comment>
<comment type="miscellaneous">
    <text>Toxic segment of the protein is located in the N-terminus.</text>
</comment>
<comment type="similarity">
    <text evidence="1">Belongs to the delta endotoxin family.</text>
</comment>
<name>CR1BD_BACTZ</name>
<evidence type="ECO:0000305" key="1"/>
<reference key="1">
    <citation type="journal article" date="2000" name="Curr. Microbiol.">
        <title>Cloning of two new cry genes from Bacillus thuringiensis subsp. wuhanensis strain.</title>
        <authorList>
            <person name="Kuo W.-S."/>
            <person name="Lin J.-H."/>
            <person name="Tzeng C.-C."/>
            <person name="Kao S.-S."/>
            <person name="Chak K.-F."/>
        </authorList>
    </citation>
    <scope>NUCLEOTIDE SEQUENCE [GENOMIC DNA]</scope>
    <source>
        <strain>HD-525</strain>
    </source>
</reference>
<keyword id="KW-0749">Sporulation</keyword>
<keyword id="KW-0800">Toxin</keyword>
<keyword id="KW-0843">Virulence</keyword>
<proteinExistence type="evidence at transcript level"/>
<accession>Q9ZAZ5</accession>
<protein>
    <recommendedName>
        <fullName>Pesticidal crystal protein Cry1Bd</fullName>
    </recommendedName>
    <alternativeName>
        <fullName>140 kDa crystal protein</fullName>
    </alternativeName>
    <alternativeName>
        <fullName>Crystaline entomocidal protoxin</fullName>
    </alternativeName>
    <alternativeName>
        <fullName>Insecticidal delta-endotoxin CryIB(d)</fullName>
    </alternativeName>
</protein>
<sequence>MTSNRKNENEIINALSIPAVSNHSAQMDLSLDARIEDSLCIAEGNNINPLVSASTVQTGINIAGRILGVLGVPFAGQLASFYSFLVGELWPSGRDPWEIFLEHVEQLIRQQVTENTRNTAIARLEGLGRGYRSYQQALETWLDNRNDARSRSIILERYVALELDITTAIPLFRIRNEEVPLLMVYAQAANLHLLLLRDASLFGSEWGMASSDVNQYYQEQIRYTEEYSNHCVQWYNTGLNNLRGTNAESWLRYNQFRRDLTLGVLDLVALFPSYDTRTYPINTSAQLTREIYTDPIGRTNAPSGFASTNWFNNNAPSFSAIEAAIFRPPHLLDFPEQLTIYSASSRWSSTQHMNYWVGHRLNFRPIGGTLNTSTQGLTNNTSINPVTLQFTSRDVYRTESNAGTNILFTTPVNGVPWARFNFINPQNIYERGATTYSQPYQGVGIQLFDSETELPPETTERPNYESYSHRLSHIGLIIGNTLRAPVYSWTHRSADRTNTIGPNRITQIPAVKGRFLFNGSVISGPGFTGGDVVRLNRNNGNIQNRGYIEVPIQFTSTSTRYRVRVRYASVTSIELNVNLGNSSIFTNTLPATAASLDNLQSGDFGYVEINNAFTSATGNIVGARNFSANAEVIIDRFEFIPVTATFEAEYDLERAQKAVNALFTSTNPRRLKTDVTDYHIDQVSNMVACLSDEFCLDEKRELFEKVKYAKRLSDERNLLQDPNFTFISGQLSFASIDGQSNFTSINELSEHGWWGSENVTIQEGNDVFKENYVTLPGTFNECYPNYLYQKIGESELKAYTRYQLRGYIEDSQDLEIYLIRYNAKHETLDVPGTDSLWPLSVKSPIGRCGEPNRCAPHFEWNPDLDCSCRDGERCAHHSHHFTLDIDVGCTDLHENLGVWVVFKIKTQEGYARLGNLEFIEEKPLIGEALSRVKRAEKKWRDKREKLQLETKRVYTEAKETVDALFVDSHYNRLQADTNIGMIHAADRLVHRIHEAYLPELPFIPGINAVIFEELENRISTAFSLYDARNVIKNGDFNNGLSCWNVKGHVDVQQSHHRSDLVIPEWEAEVSQAVRVCPGRGYILRVTAYKEGYGEGCVTIHEIENNTDELKFKNCEEEEVYPTDTGTCNDYTAHQGTAACNSRNAGYEDAYEVDTTASVNYKPTYEEETYTDVRRDNHCEYDRGYVNYPPVPAGYVTKELEYFPETDTVWIEIGETEGKFIVDSVELLLMEE</sequence>
<dbReference type="EMBL" id="U70726">
    <property type="protein sequence ID" value="AAD10292.1"/>
    <property type="molecule type" value="Genomic_DNA"/>
</dbReference>
<dbReference type="RefSeq" id="WP_033698198.1">
    <property type="nucleotide sequence ID" value="NZ_NFEE01000106.1"/>
</dbReference>
<dbReference type="SMR" id="Q9ZAZ5"/>
<dbReference type="GO" id="GO:0005102">
    <property type="term" value="F:signaling receptor binding"/>
    <property type="evidence" value="ECO:0007669"/>
    <property type="project" value="InterPro"/>
</dbReference>
<dbReference type="GO" id="GO:0090729">
    <property type="term" value="F:toxin activity"/>
    <property type="evidence" value="ECO:0007669"/>
    <property type="project" value="UniProtKB-KW"/>
</dbReference>
<dbReference type="GO" id="GO:0030435">
    <property type="term" value="P:sporulation resulting in formation of a cellular spore"/>
    <property type="evidence" value="ECO:0007669"/>
    <property type="project" value="UniProtKB-KW"/>
</dbReference>
<dbReference type="GO" id="GO:0001907">
    <property type="term" value="P:symbiont-mediated killing of host cell"/>
    <property type="evidence" value="ECO:0007669"/>
    <property type="project" value="InterPro"/>
</dbReference>
<dbReference type="CDD" id="cd04085">
    <property type="entry name" value="delta_endotoxin_C"/>
    <property type="match status" value="1"/>
</dbReference>
<dbReference type="Gene3D" id="2.60.120.260">
    <property type="entry name" value="Galactose-binding domain-like"/>
    <property type="match status" value="1"/>
</dbReference>
<dbReference type="Gene3D" id="2.100.10.10">
    <property type="entry name" value="Pesticidal crystal protein, central domain"/>
    <property type="match status" value="1"/>
</dbReference>
<dbReference type="Gene3D" id="1.20.190.10">
    <property type="entry name" value="Pesticidal crystal protein, N-terminal domain"/>
    <property type="match status" value="1"/>
</dbReference>
<dbReference type="InterPro" id="IPR048645">
    <property type="entry name" value="Cry1Ac-like_dom-VII"/>
</dbReference>
<dbReference type="InterPro" id="IPR041587">
    <property type="entry name" value="Cry_V"/>
</dbReference>
<dbReference type="InterPro" id="IPR008979">
    <property type="entry name" value="Galactose-bd-like_sf"/>
</dbReference>
<dbReference type="InterPro" id="IPR038979">
    <property type="entry name" value="Pest_crys"/>
</dbReference>
<dbReference type="InterPro" id="IPR005638">
    <property type="entry name" value="Pest_crys_dom-III"/>
</dbReference>
<dbReference type="InterPro" id="IPR005639">
    <property type="entry name" value="Pest_crys_dom_I"/>
</dbReference>
<dbReference type="InterPro" id="IPR036716">
    <property type="entry name" value="Pest_crys_N_sf"/>
</dbReference>
<dbReference type="InterPro" id="IPR036399">
    <property type="entry name" value="Pest_cryst_cen_dom_sf"/>
</dbReference>
<dbReference type="InterPro" id="IPR001178">
    <property type="entry name" value="Pest_cryst_dom_II"/>
</dbReference>
<dbReference type="PANTHER" id="PTHR37003">
    <property type="entry name" value="ENDOTOXIN_N DOMAIN-CONTAINING PROTEIN-RELATED"/>
    <property type="match status" value="1"/>
</dbReference>
<dbReference type="PANTHER" id="PTHR37003:SF2">
    <property type="entry name" value="PESTICIDAL CRYSTAL PROTEIN N-TERMINAL DOMAIN-CONTAINING PROTEIN"/>
    <property type="match status" value="1"/>
</dbReference>
<dbReference type="Pfam" id="PF17997">
    <property type="entry name" value="Cry1Ac_D5"/>
    <property type="match status" value="1"/>
</dbReference>
<dbReference type="Pfam" id="PF21463">
    <property type="entry name" value="Cry1Ac_dom-VII"/>
    <property type="match status" value="1"/>
</dbReference>
<dbReference type="Pfam" id="PF03944">
    <property type="entry name" value="Endotoxin_C"/>
    <property type="match status" value="1"/>
</dbReference>
<dbReference type="Pfam" id="PF00555">
    <property type="entry name" value="Endotoxin_M"/>
    <property type="match status" value="1"/>
</dbReference>
<dbReference type="Pfam" id="PF03945">
    <property type="entry name" value="Endotoxin_N"/>
    <property type="match status" value="1"/>
</dbReference>
<dbReference type="SUPFAM" id="SSF51096">
    <property type="entry name" value="delta-Endotoxin (insectocide), middle domain"/>
    <property type="match status" value="1"/>
</dbReference>
<dbReference type="SUPFAM" id="SSF56849">
    <property type="entry name" value="delta-Endotoxin (insectocide), N-terminal domain"/>
    <property type="match status" value="1"/>
</dbReference>
<dbReference type="SUPFAM" id="SSF49785">
    <property type="entry name" value="Galactose-binding domain-like"/>
    <property type="match status" value="1"/>
</dbReference>
<feature type="chain" id="PRO_0000174033" description="Pesticidal crystal protein Cry1Bd">
    <location>
        <begin position="1"/>
        <end position="1231"/>
    </location>
</feature>